<proteinExistence type="evidence at protein level"/>
<evidence type="ECO:0000250" key="1"/>
<evidence type="ECO:0000256" key="2">
    <source>
        <dbReference type="SAM" id="MobiDB-lite"/>
    </source>
</evidence>
<evidence type="ECO:0000269" key="3">
    <source>
    </source>
</evidence>
<evidence type="ECO:0000305" key="4"/>
<sequence length="126" mass="13411">MSGRGKGAKAKGKAKSRSSRAGLQFPVGRVHRFLRKGNYANRVGAGAPVYLAAVLEYLAAEILELAGNAARDNKKTRIIPRHLQLAIRNDEELNKLLGGVTIAQGGVLPNIQAVLLPKKTGSKSSK</sequence>
<name>H2A3_PSAMI</name>
<keyword id="KW-0007">Acetylation</keyword>
<keyword id="KW-0158">Chromosome</keyword>
<keyword id="KW-0903">Direct protein sequencing</keyword>
<keyword id="KW-0238">DNA-binding</keyword>
<keyword id="KW-1017">Isopeptide bond</keyword>
<keyword id="KW-0488">Methylation</keyword>
<keyword id="KW-0544">Nucleosome core</keyword>
<keyword id="KW-0539">Nucleus</keyword>
<keyword id="KW-0597">Phosphoprotein</keyword>
<keyword id="KW-0832">Ubl conjugation</keyword>
<comment type="function">
    <text>Core component of nucleosome. Nucleosomes wrap and compact DNA into chromatin, limiting DNA accessibility to the cellular machineries which require DNA as a template. Histones thereby play a central role in transcription regulation, DNA repair, DNA replication and chromosomal stability. DNA accessibility is regulated via a complex set of post-translational modifications of histones, also called histone code, and nucleosome remodeling.</text>
</comment>
<comment type="subunit">
    <text>The nucleosome is a histone octamer containing two molecules each of H2A, H2B, H3 and H4 assembled in one H3-H4 heterotetramer and two H2A-H2B heterodimers. The octamer wraps approximately 147 bp of DNA.</text>
</comment>
<comment type="subcellular location">
    <subcellularLocation>
        <location>Nucleus</location>
    </subcellularLocation>
    <subcellularLocation>
        <location>Chromosome</location>
    </subcellularLocation>
</comment>
<comment type="developmental stage">
    <text>The different late H2A and H2B mRNAs are present in as few as 200 copies in the egg and each accumulate to 3-5 x 100000 molecules in the gastrula embryo. The H2A-3 mRNA is also abundant in testis RNA and codes for the H2A variant present in sperm chromatin.</text>
</comment>
<comment type="PTM">
    <text evidence="1">Monoubiquitination of Lys-119 gives a specific tag for epigenetic transcriptional repression.</text>
</comment>
<comment type="PTM">
    <text evidence="1">Phosphorylation of Ser-2 directly represses transcription.</text>
</comment>
<comment type="similarity">
    <text evidence="4">Belongs to the histone H2A family.</text>
</comment>
<organism>
    <name type="scientific">Psammechinus miliaris</name>
    <name type="common">Green sea urchin</name>
    <name type="synonym">Echinus miliaris</name>
    <dbReference type="NCBI Taxonomy" id="7660"/>
    <lineage>
        <taxon>Eukaryota</taxon>
        <taxon>Metazoa</taxon>
        <taxon>Echinodermata</taxon>
        <taxon>Eleutherozoa</taxon>
        <taxon>Echinozoa</taxon>
        <taxon>Echinoidea</taxon>
        <taxon>Euechinoidea</taxon>
        <taxon>Echinacea</taxon>
        <taxon>Camarodonta</taxon>
        <taxon>Echinidea</taxon>
        <taxon>Parechinidae</taxon>
        <taxon>Psammechinus</taxon>
    </lineage>
</organism>
<feature type="initiator methionine" description="Removed" evidence="3">
    <location>
        <position position="1"/>
    </location>
</feature>
<feature type="chain" id="PRO_0000055272" description="Late histone H2A.3, gonadal">
    <location>
        <begin position="2"/>
        <end position="126"/>
    </location>
</feature>
<feature type="region of interest" description="Disordered" evidence="2">
    <location>
        <begin position="1"/>
        <end position="21"/>
    </location>
</feature>
<feature type="compositionally biased region" description="Basic residues" evidence="2">
    <location>
        <begin position="1"/>
        <end position="18"/>
    </location>
</feature>
<feature type="modified residue" description="N-acetylserine" evidence="3">
    <location>
        <position position="2"/>
    </location>
</feature>
<feature type="modified residue" description="Phosphoserine" evidence="1">
    <location>
        <position position="2"/>
    </location>
</feature>
<feature type="modified residue" description="N5-methylglutamine" evidence="1">
    <location>
        <position position="104"/>
    </location>
</feature>
<feature type="cross-link" description="Glycyl lysine isopeptide (Lys-Gly) (interchain with G-Cter in ubiquitin)" evidence="1">
    <location>
        <position position="119"/>
    </location>
</feature>
<feature type="sequence conflict" description="In Ref. 2; AA sequence." evidence="4" ref="2">
    <original>AKG</original>
    <variation>GKA</variation>
    <location>
        <begin position="10"/>
        <end position="12"/>
    </location>
</feature>
<dbReference type="EMBL" id="M11083">
    <property type="protein sequence ID" value="AAA30019.1"/>
    <property type="molecule type" value="mRNA"/>
</dbReference>
<dbReference type="PIR" id="A38054">
    <property type="entry name" value="HSUR9M"/>
</dbReference>
<dbReference type="SMR" id="P69139"/>
<dbReference type="iPTMnet" id="P69139"/>
<dbReference type="GO" id="GO:0000786">
    <property type="term" value="C:nucleosome"/>
    <property type="evidence" value="ECO:0007669"/>
    <property type="project" value="UniProtKB-KW"/>
</dbReference>
<dbReference type="GO" id="GO:0005634">
    <property type="term" value="C:nucleus"/>
    <property type="evidence" value="ECO:0007669"/>
    <property type="project" value="UniProtKB-SubCell"/>
</dbReference>
<dbReference type="GO" id="GO:0003677">
    <property type="term" value="F:DNA binding"/>
    <property type="evidence" value="ECO:0007669"/>
    <property type="project" value="UniProtKB-KW"/>
</dbReference>
<dbReference type="GO" id="GO:0046982">
    <property type="term" value="F:protein heterodimerization activity"/>
    <property type="evidence" value="ECO:0007669"/>
    <property type="project" value="InterPro"/>
</dbReference>
<dbReference type="GO" id="GO:0030527">
    <property type="term" value="F:structural constituent of chromatin"/>
    <property type="evidence" value="ECO:0007669"/>
    <property type="project" value="InterPro"/>
</dbReference>
<dbReference type="CDD" id="cd00074">
    <property type="entry name" value="HFD_H2A"/>
    <property type="match status" value="1"/>
</dbReference>
<dbReference type="FunFam" id="1.10.20.10:FF:000020">
    <property type="entry name" value="Histone H2A"/>
    <property type="match status" value="1"/>
</dbReference>
<dbReference type="Gene3D" id="1.10.20.10">
    <property type="entry name" value="Histone, subunit A"/>
    <property type="match status" value="1"/>
</dbReference>
<dbReference type="InterPro" id="IPR009072">
    <property type="entry name" value="Histone-fold"/>
</dbReference>
<dbReference type="InterPro" id="IPR002119">
    <property type="entry name" value="Histone_H2A"/>
</dbReference>
<dbReference type="InterPro" id="IPR007125">
    <property type="entry name" value="Histone_H2A/H2B/H3"/>
</dbReference>
<dbReference type="InterPro" id="IPR032454">
    <property type="entry name" value="Histone_H2A_C"/>
</dbReference>
<dbReference type="InterPro" id="IPR032458">
    <property type="entry name" value="Histone_H2A_CS"/>
</dbReference>
<dbReference type="PANTHER" id="PTHR23430">
    <property type="entry name" value="HISTONE H2A"/>
    <property type="match status" value="1"/>
</dbReference>
<dbReference type="Pfam" id="PF00125">
    <property type="entry name" value="Histone"/>
    <property type="match status" value="1"/>
</dbReference>
<dbReference type="Pfam" id="PF16211">
    <property type="entry name" value="Histone_H2A_C"/>
    <property type="match status" value="1"/>
</dbReference>
<dbReference type="PRINTS" id="PR00620">
    <property type="entry name" value="HISTONEH2A"/>
</dbReference>
<dbReference type="SMART" id="SM00414">
    <property type="entry name" value="H2A"/>
    <property type="match status" value="1"/>
</dbReference>
<dbReference type="SUPFAM" id="SSF47113">
    <property type="entry name" value="Histone-fold"/>
    <property type="match status" value="1"/>
</dbReference>
<dbReference type="PROSITE" id="PS00046">
    <property type="entry name" value="HISTONE_H2A"/>
    <property type="match status" value="1"/>
</dbReference>
<accession>P69139</accession>
<accession>P02265</accession>
<reference key="1">
    <citation type="journal article" date="1985" name="Proc. Natl. Acad. Sci. U.S.A.">
        <title>Synthesis of sperm and late histone cDNAs of the sea urchin with a primer complementary to the conserved 3' terminal palindrome: evidence for tissue-specific and more general histone gene variants.</title>
        <authorList>
            <person name="Busslinger M."/>
            <person name="Barberis A."/>
        </authorList>
    </citation>
    <scope>NUCLEOTIDE SEQUENCE [MRNA]</scope>
</reference>
<reference key="2">
    <citation type="journal article" date="1978" name="Eur. J. Biochem.">
        <title>Primary structure of histone H2A from gonad of the sea urchin Psammechinus miliaris.</title>
        <authorList>
            <person name="Wouters D."/>
            <person name="Sautiere P."/>
            <person name="Biserte G."/>
        </authorList>
    </citation>
    <scope>PROTEIN SEQUENCE OF 2-126</scope>
    <scope>ACETYLATION AT SER-2</scope>
</reference>
<protein>
    <recommendedName>
        <fullName>Late histone H2A.3, gonadal</fullName>
    </recommendedName>
</protein>